<gene>
    <name type="ORF">OsI_07337</name>
</gene>
<dbReference type="EC" id="1.14.19.-"/>
<dbReference type="EMBL" id="CM000127">
    <property type="protein sequence ID" value="EEC73239.1"/>
    <property type="molecule type" value="Genomic_DNA"/>
</dbReference>
<dbReference type="SMR" id="B8AIC3"/>
<dbReference type="STRING" id="39946.B8AIC3"/>
<dbReference type="EnsemblPlants" id="BGIOSGA006418-TA">
    <property type="protein sequence ID" value="BGIOSGA006418-PA"/>
    <property type="gene ID" value="BGIOSGA006418"/>
</dbReference>
<dbReference type="Gramene" id="BGIOSGA006418-TA">
    <property type="protein sequence ID" value="BGIOSGA006418-PA"/>
    <property type="gene ID" value="BGIOSGA006418"/>
</dbReference>
<dbReference type="HOGENOM" id="CLU_034505_1_0_1"/>
<dbReference type="OMA" id="GWAADTI"/>
<dbReference type="UniPathway" id="UPA00199"/>
<dbReference type="Proteomes" id="UP000007015">
    <property type="component" value="Chromosome 2"/>
</dbReference>
<dbReference type="GO" id="GO:0009570">
    <property type="term" value="C:chloroplast stroma"/>
    <property type="evidence" value="ECO:0007669"/>
    <property type="project" value="TreeGrafter"/>
</dbReference>
<dbReference type="GO" id="GO:0046872">
    <property type="term" value="F:metal ion binding"/>
    <property type="evidence" value="ECO:0007669"/>
    <property type="project" value="UniProtKB-KW"/>
</dbReference>
<dbReference type="GO" id="GO:0045300">
    <property type="term" value="F:stearoyl-[ACP] desaturase activity"/>
    <property type="evidence" value="ECO:0007669"/>
    <property type="project" value="InterPro"/>
</dbReference>
<dbReference type="GO" id="GO:0006633">
    <property type="term" value="P:fatty acid biosynthetic process"/>
    <property type="evidence" value="ECO:0007669"/>
    <property type="project" value="UniProtKB-KW"/>
</dbReference>
<dbReference type="CDD" id="cd01050">
    <property type="entry name" value="Acyl_ACP_Desat"/>
    <property type="match status" value="1"/>
</dbReference>
<dbReference type="FunFam" id="1.10.620.20:FF:000002">
    <property type="entry name" value="Stearoyl-[acyl-carrier-protein] 9-desaturase, chloroplastic"/>
    <property type="match status" value="1"/>
</dbReference>
<dbReference type="Gene3D" id="1.10.620.20">
    <property type="entry name" value="Ribonucleotide Reductase, subunit A"/>
    <property type="match status" value="1"/>
</dbReference>
<dbReference type="InterPro" id="IPR005067">
    <property type="entry name" value="Fatty_acid_desaturase-2"/>
</dbReference>
<dbReference type="InterPro" id="IPR009078">
    <property type="entry name" value="Ferritin-like_SF"/>
</dbReference>
<dbReference type="InterPro" id="IPR012348">
    <property type="entry name" value="RNR-like"/>
</dbReference>
<dbReference type="PANTHER" id="PTHR31155">
    <property type="entry name" value="ACYL- ACYL-CARRIER-PROTEIN DESATURASE-RELATED"/>
    <property type="match status" value="1"/>
</dbReference>
<dbReference type="PANTHER" id="PTHR31155:SF8">
    <property type="entry name" value="ACYL-[ACYL-CARRIER-PROTEIN] DESATURASE 3, CHLOROPLASTIC"/>
    <property type="match status" value="1"/>
</dbReference>
<dbReference type="Pfam" id="PF03405">
    <property type="entry name" value="FA_desaturase_2"/>
    <property type="match status" value="1"/>
</dbReference>
<dbReference type="PIRSF" id="PIRSF000346">
    <property type="entry name" value="Dlt9_acylACP_des"/>
    <property type="match status" value="1"/>
</dbReference>
<dbReference type="SUPFAM" id="SSF47240">
    <property type="entry name" value="Ferritin-like"/>
    <property type="match status" value="1"/>
</dbReference>
<keyword id="KW-0150">Chloroplast</keyword>
<keyword id="KW-0275">Fatty acid biosynthesis</keyword>
<keyword id="KW-0276">Fatty acid metabolism</keyword>
<keyword id="KW-0408">Iron</keyword>
<keyword id="KW-0444">Lipid biosynthesis</keyword>
<keyword id="KW-0443">Lipid metabolism</keyword>
<keyword id="KW-0479">Metal-binding</keyword>
<keyword id="KW-0560">Oxidoreductase</keyword>
<keyword id="KW-0934">Plastid</keyword>
<keyword id="KW-1185">Reference proteome</keyword>
<keyword id="KW-0809">Transit peptide</keyword>
<proteinExistence type="inferred from homology"/>
<sequence length="402" mass="43984">MSLTGCLPPRPPCSMRRRTSGGGASVSPVVVMASTAGVGGIGNPTPRGKKPFAPWREVPPQVTHTLPPEKKEVFDSLEGWAADTILPYLKPVEESWQPQDHLPDPRSPSFGDEVAALRERAAGLPDDHLVCLVGDMVTEEALPTYQTMLNTMDGGVRDETGAGGSAWAVWTRAWAAEENRHGDLMNKYLYLTGRVDMRQVEKTIQYLIGSGMDPRTENDPYMGFIYTTFQERATSISHGNTARHAGRHGDAALARVCGTVAADEKRHEAAYAAIVAKLFEVDPDYTVRAFARMMRRKVAMPARLMYDGADDRLFARFAAVAQRLGVYTAADYAGIIEFLVARWGVPGLAAGLSGEGRRAQDFVCSLGPRFRRMEERAQEAAKRAPPAAAAPFSWIHGRQVQL</sequence>
<comment type="function">
    <text evidence="4">Introduces a cis double bond in the acyl chain of an acyl-[acyl-carrier protein].</text>
</comment>
<comment type="cofactor">
    <cofactor evidence="1">
        <name>Fe(2+)</name>
        <dbReference type="ChEBI" id="CHEBI:29033"/>
    </cofactor>
    <text evidence="1">Binds 2 Fe(2+) ions per subunit.</text>
</comment>
<comment type="pathway">
    <text>Lipid metabolism; fatty acid metabolism.</text>
</comment>
<comment type="subunit">
    <text evidence="1">Homodimer.</text>
</comment>
<comment type="subcellular location">
    <subcellularLocation>
        <location evidence="4">Plastid</location>
        <location evidence="4">Chloroplast</location>
    </subcellularLocation>
</comment>
<comment type="similarity">
    <text evidence="4">Belongs to the fatty acid desaturase type 2 family.</text>
</comment>
<feature type="transit peptide" description="Chloroplast" evidence="2">
    <location>
        <begin position="1"/>
        <end position="32"/>
    </location>
</feature>
<feature type="chain" id="PRO_0000401431" description="Acyl-[acyl-carrier-protein] desaturase 3, chloroplastic">
    <location>
        <begin position="33"/>
        <end position="402"/>
    </location>
</feature>
<feature type="region of interest" description="Disordered" evidence="3">
    <location>
        <begin position="1"/>
        <end position="25"/>
    </location>
</feature>
<feature type="region of interest" description="Disordered" evidence="3">
    <location>
        <begin position="38"/>
        <end position="66"/>
    </location>
</feature>
<feature type="binding site" evidence="1">
    <location>
        <position position="139"/>
    </location>
    <ligand>
        <name>Fe cation</name>
        <dbReference type="ChEBI" id="CHEBI:24875"/>
        <label>1</label>
    </ligand>
</feature>
<feature type="binding site" evidence="1">
    <location>
        <position position="178"/>
    </location>
    <ligand>
        <name>Fe cation</name>
        <dbReference type="ChEBI" id="CHEBI:24875"/>
        <label>1</label>
    </ligand>
</feature>
<feature type="binding site" evidence="1">
    <location>
        <position position="178"/>
    </location>
    <ligand>
        <name>Fe cation</name>
        <dbReference type="ChEBI" id="CHEBI:24875"/>
        <label>2</label>
    </ligand>
</feature>
<feature type="binding site" evidence="1">
    <location>
        <position position="181"/>
    </location>
    <ligand>
        <name>Fe cation</name>
        <dbReference type="ChEBI" id="CHEBI:24875"/>
        <label>1</label>
    </ligand>
</feature>
<feature type="binding site" evidence="1">
    <location>
        <position position="231"/>
    </location>
    <ligand>
        <name>Fe cation</name>
        <dbReference type="ChEBI" id="CHEBI:24875"/>
        <label>2</label>
    </ligand>
</feature>
<feature type="binding site" evidence="1">
    <location>
        <position position="264"/>
    </location>
    <ligand>
        <name>Fe cation</name>
        <dbReference type="ChEBI" id="CHEBI:24875"/>
        <label>1</label>
    </ligand>
</feature>
<feature type="binding site" evidence="1">
    <location>
        <position position="264"/>
    </location>
    <ligand>
        <name>Fe cation</name>
        <dbReference type="ChEBI" id="CHEBI:24875"/>
        <label>2</label>
    </ligand>
</feature>
<feature type="binding site" evidence="1">
    <location>
        <position position="267"/>
    </location>
    <ligand>
        <name>Fe cation</name>
        <dbReference type="ChEBI" id="CHEBI:24875"/>
        <label>2</label>
    </ligand>
</feature>
<name>STAD3_ORYSI</name>
<accession>B8AIC3</accession>
<reference key="1">
    <citation type="journal article" date="2005" name="PLoS Biol.">
        <title>The genomes of Oryza sativa: a history of duplications.</title>
        <authorList>
            <person name="Yu J."/>
            <person name="Wang J."/>
            <person name="Lin W."/>
            <person name="Li S."/>
            <person name="Li H."/>
            <person name="Zhou J."/>
            <person name="Ni P."/>
            <person name="Dong W."/>
            <person name="Hu S."/>
            <person name="Zeng C."/>
            <person name="Zhang J."/>
            <person name="Zhang Y."/>
            <person name="Li R."/>
            <person name="Xu Z."/>
            <person name="Li S."/>
            <person name="Li X."/>
            <person name="Zheng H."/>
            <person name="Cong L."/>
            <person name="Lin L."/>
            <person name="Yin J."/>
            <person name="Geng J."/>
            <person name="Li G."/>
            <person name="Shi J."/>
            <person name="Liu J."/>
            <person name="Lv H."/>
            <person name="Li J."/>
            <person name="Wang J."/>
            <person name="Deng Y."/>
            <person name="Ran L."/>
            <person name="Shi X."/>
            <person name="Wang X."/>
            <person name="Wu Q."/>
            <person name="Li C."/>
            <person name="Ren X."/>
            <person name="Wang J."/>
            <person name="Wang X."/>
            <person name="Li D."/>
            <person name="Liu D."/>
            <person name="Zhang X."/>
            <person name="Ji Z."/>
            <person name="Zhao W."/>
            <person name="Sun Y."/>
            <person name="Zhang Z."/>
            <person name="Bao J."/>
            <person name="Han Y."/>
            <person name="Dong L."/>
            <person name="Ji J."/>
            <person name="Chen P."/>
            <person name="Wu S."/>
            <person name="Liu J."/>
            <person name="Xiao Y."/>
            <person name="Bu D."/>
            <person name="Tan J."/>
            <person name="Yang L."/>
            <person name="Ye C."/>
            <person name="Zhang J."/>
            <person name="Xu J."/>
            <person name="Zhou Y."/>
            <person name="Yu Y."/>
            <person name="Zhang B."/>
            <person name="Zhuang S."/>
            <person name="Wei H."/>
            <person name="Liu B."/>
            <person name="Lei M."/>
            <person name="Yu H."/>
            <person name="Li Y."/>
            <person name="Xu H."/>
            <person name="Wei S."/>
            <person name="He X."/>
            <person name="Fang L."/>
            <person name="Zhang Z."/>
            <person name="Zhang Y."/>
            <person name="Huang X."/>
            <person name="Su Z."/>
            <person name="Tong W."/>
            <person name="Li J."/>
            <person name="Tong Z."/>
            <person name="Li S."/>
            <person name="Ye J."/>
            <person name="Wang L."/>
            <person name="Fang L."/>
            <person name="Lei T."/>
            <person name="Chen C.-S."/>
            <person name="Chen H.-C."/>
            <person name="Xu Z."/>
            <person name="Li H."/>
            <person name="Huang H."/>
            <person name="Zhang F."/>
            <person name="Xu H."/>
            <person name="Li N."/>
            <person name="Zhao C."/>
            <person name="Li S."/>
            <person name="Dong L."/>
            <person name="Huang Y."/>
            <person name="Li L."/>
            <person name="Xi Y."/>
            <person name="Qi Q."/>
            <person name="Li W."/>
            <person name="Zhang B."/>
            <person name="Hu W."/>
            <person name="Zhang Y."/>
            <person name="Tian X."/>
            <person name="Jiao Y."/>
            <person name="Liang X."/>
            <person name="Jin J."/>
            <person name="Gao L."/>
            <person name="Zheng W."/>
            <person name="Hao B."/>
            <person name="Liu S.-M."/>
            <person name="Wang W."/>
            <person name="Yuan L."/>
            <person name="Cao M."/>
            <person name="McDermott J."/>
            <person name="Samudrala R."/>
            <person name="Wang J."/>
            <person name="Wong G.K.-S."/>
            <person name="Yang H."/>
        </authorList>
    </citation>
    <scope>NUCLEOTIDE SEQUENCE [LARGE SCALE GENOMIC DNA]</scope>
    <source>
        <strain>cv. 93-11</strain>
    </source>
</reference>
<protein>
    <recommendedName>
        <fullName>Acyl-[acyl-carrier-protein] desaturase 3, chloroplastic</fullName>
        <ecNumber>1.14.19.-</ecNumber>
    </recommendedName>
</protein>
<organism>
    <name type="scientific">Oryza sativa subsp. indica</name>
    <name type="common">Rice</name>
    <dbReference type="NCBI Taxonomy" id="39946"/>
    <lineage>
        <taxon>Eukaryota</taxon>
        <taxon>Viridiplantae</taxon>
        <taxon>Streptophyta</taxon>
        <taxon>Embryophyta</taxon>
        <taxon>Tracheophyta</taxon>
        <taxon>Spermatophyta</taxon>
        <taxon>Magnoliopsida</taxon>
        <taxon>Liliopsida</taxon>
        <taxon>Poales</taxon>
        <taxon>Poaceae</taxon>
        <taxon>BOP clade</taxon>
        <taxon>Oryzoideae</taxon>
        <taxon>Oryzeae</taxon>
        <taxon>Oryzinae</taxon>
        <taxon>Oryza</taxon>
        <taxon>Oryza sativa</taxon>
    </lineage>
</organism>
<evidence type="ECO:0000250" key="1">
    <source>
        <dbReference type="UniProtKB" id="P22337"/>
    </source>
</evidence>
<evidence type="ECO:0000255" key="2"/>
<evidence type="ECO:0000256" key="3">
    <source>
        <dbReference type="SAM" id="MobiDB-lite"/>
    </source>
</evidence>
<evidence type="ECO:0000305" key="4"/>